<feature type="chain" id="PRO_1000192539" description="Guanosine-5'-triphosphate,3'-diphosphate pyrophosphatase">
    <location>
        <begin position="1"/>
        <end position="493"/>
    </location>
</feature>
<accession>B4TNT2</accession>
<proteinExistence type="inferred from homology"/>
<comment type="function">
    <text evidence="1">Catalyzes the conversion of pppGpp to ppGpp. Guanosine pentaphosphate (pppGpp) is a cytoplasmic signaling molecule which together with ppGpp controls the 'stringent response', an adaptive process that allows bacteria to respond to amino acid starvation, resulting in the coordinated regulation of numerous cellular activities.</text>
</comment>
<comment type="catalytic activity">
    <reaction evidence="1">
        <text>guanosine 3'-diphosphate 5'-triphosphate + H2O = guanosine 3',5'-bis(diphosphate) + phosphate + H(+)</text>
        <dbReference type="Rhea" id="RHEA:13073"/>
        <dbReference type="ChEBI" id="CHEBI:15377"/>
        <dbReference type="ChEBI" id="CHEBI:15378"/>
        <dbReference type="ChEBI" id="CHEBI:43474"/>
        <dbReference type="ChEBI" id="CHEBI:77828"/>
        <dbReference type="ChEBI" id="CHEBI:142410"/>
        <dbReference type="EC" id="3.6.1.40"/>
    </reaction>
</comment>
<comment type="pathway">
    <text evidence="1">Purine metabolism; ppGpp biosynthesis; ppGpp from GTP: step 2/2.</text>
</comment>
<comment type="similarity">
    <text evidence="1">Belongs to the GppA/Ppx family. GppA subfamily.</text>
</comment>
<sequence>MNSTSLYAAIDLGSNSFHMLVVREAAGSIQTLTRIKRKVRLAAGLNNDNHLSAEAMERGWQCLRLFAERLQDIPQPQIRVVATATLRLAVNAGEFIAKAQTILGCPVQVISGEEEARLIYQGVAHTTGGADQRLVVDIGGASTELVTGTGAQTTSLFSLSMGCVTWLERYFSDRNLAQENFDDAEKAARDVLRPVADELRFHGWKVCVGASGTVQALQEIMMAQGMDERITLAKLQQLKQRAIQCGRLEELEIEGLTLERALVFPSGLAILIAIFTELNIQSMTLAGGALREGLVYGMLHLAVDQDIRSRTLRNIQRRFIVDTDQANRVAKLADNFLKQVENAWHIEPISRELLLSACQLHEIGLSVDFKQAPYHAAYLVRHLDLPGYTPAQKKLLATLLLNQTNPVDLSSLHQQNAVPPRVAEQLCRLLRLAILFAGRRRDDLVPEITLQALNENLTLTLPGDWLAHHPLGKELIDQESQWQSYVHWPLDVR</sequence>
<evidence type="ECO:0000255" key="1">
    <source>
        <dbReference type="HAMAP-Rule" id="MF_01550"/>
    </source>
</evidence>
<protein>
    <recommendedName>
        <fullName evidence="1">Guanosine-5'-triphosphate,3'-diphosphate pyrophosphatase</fullName>
        <ecNumber evidence="1">3.6.1.40</ecNumber>
    </recommendedName>
    <alternativeName>
        <fullName evidence="1">Guanosine pentaphosphate phosphohydrolase</fullName>
    </alternativeName>
    <alternativeName>
        <fullName evidence="1">pppGpp-5'-phosphohydrolase</fullName>
    </alternativeName>
</protein>
<organism>
    <name type="scientific">Salmonella schwarzengrund (strain CVM19633)</name>
    <dbReference type="NCBI Taxonomy" id="439843"/>
    <lineage>
        <taxon>Bacteria</taxon>
        <taxon>Pseudomonadati</taxon>
        <taxon>Pseudomonadota</taxon>
        <taxon>Gammaproteobacteria</taxon>
        <taxon>Enterobacterales</taxon>
        <taxon>Enterobacteriaceae</taxon>
        <taxon>Salmonella</taxon>
    </lineage>
</organism>
<name>GPPA_SALSV</name>
<dbReference type="EC" id="3.6.1.40" evidence="1"/>
<dbReference type="EMBL" id="CP001127">
    <property type="protein sequence ID" value="ACF92605.1"/>
    <property type="molecule type" value="Genomic_DNA"/>
</dbReference>
<dbReference type="RefSeq" id="WP_001089447.1">
    <property type="nucleotide sequence ID" value="NC_011094.1"/>
</dbReference>
<dbReference type="SMR" id="B4TNT2"/>
<dbReference type="KEGG" id="sew:SeSA_A4125"/>
<dbReference type="HOGENOM" id="CLU_025908_4_0_6"/>
<dbReference type="UniPathway" id="UPA00908">
    <property type="reaction ID" value="UER00885"/>
</dbReference>
<dbReference type="Proteomes" id="UP000001865">
    <property type="component" value="Chromosome"/>
</dbReference>
<dbReference type="GO" id="GO:0008894">
    <property type="term" value="F:guanosine-5'-triphosphate,3'-diphosphate diphosphatase activity"/>
    <property type="evidence" value="ECO:0007669"/>
    <property type="project" value="UniProtKB-UniRule"/>
</dbReference>
<dbReference type="GO" id="GO:0015974">
    <property type="term" value="P:guanosine pentaphosphate catabolic process"/>
    <property type="evidence" value="ECO:0007669"/>
    <property type="project" value="InterPro"/>
</dbReference>
<dbReference type="GO" id="GO:0015970">
    <property type="term" value="P:guanosine tetraphosphate biosynthetic process"/>
    <property type="evidence" value="ECO:0007669"/>
    <property type="project" value="UniProtKB-UniRule"/>
</dbReference>
<dbReference type="GO" id="GO:0015949">
    <property type="term" value="P:nucleobase-containing small molecule interconversion"/>
    <property type="evidence" value="ECO:0007669"/>
    <property type="project" value="TreeGrafter"/>
</dbReference>
<dbReference type="CDD" id="cd24117">
    <property type="entry name" value="ASKHA_NBD_EcGppA-like"/>
    <property type="match status" value="1"/>
</dbReference>
<dbReference type="FunFam" id="1.10.3210.10:FF:000004">
    <property type="entry name" value="Guanosine-5'-triphosphate,3'-diphosphate pyrophosphatase"/>
    <property type="match status" value="1"/>
</dbReference>
<dbReference type="FunFam" id="3.30.420.150:FF:000001">
    <property type="entry name" value="Guanosine-5'-triphosphate,3'-diphosphate pyrophosphatase"/>
    <property type="match status" value="1"/>
</dbReference>
<dbReference type="FunFam" id="3.30.420.40:FF:000023">
    <property type="entry name" value="Guanosine-5'-triphosphate,3'-diphosphate pyrophosphatase"/>
    <property type="match status" value="1"/>
</dbReference>
<dbReference type="Gene3D" id="3.30.420.40">
    <property type="match status" value="1"/>
</dbReference>
<dbReference type="Gene3D" id="3.30.420.150">
    <property type="entry name" value="Exopolyphosphatase. Domain 2"/>
    <property type="match status" value="1"/>
</dbReference>
<dbReference type="Gene3D" id="1.10.3210.10">
    <property type="entry name" value="Hypothetical protein af1432"/>
    <property type="match status" value="1"/>
</dbReference>
<dbReference type="HAMAP" id="MF_01550">
    <property type="entry name" value="GppA"/>
    <property type="match status" value="1"/>
</dbReference>
<dbReference type="InterPro" id="IPR043129">
    <property type="entry name" value="ATPase_NBD"/>
</dbReference>
<dbReference type="InterPro" id="IPR050273">
    <property type="entry name" value="GppA/Ppx_hydrolase"/>
</dbReference>
<dbReference type="InterPro" id="IPR023709">
    <property type="entry name" value="Guo-5TP_3DP_PyrP"/>
</dbReference>
<dbReference type="InterPro" id="IPR048950">
    <property type="entry name" value="Ppx_GppA_C"/>
</dbReference>
<dbReference type="InterPro" id="IPR003695">
    <property type="entry name" value="Ppx_GppA_N"/>
</dbReference>
<dbReference type="InterPro" id="IPR030673">
    <property type="entry name" value="PyroPPase_GppA_Ppx"/>
</dbReference>
<dbReference type="NCBIfam" id="NF008260">
    <property type="entry name" value="PRK11031.1"/>
    <property type="match status" value="1"/>
</dbReference>
<dbReference type="PANTHER" id="PTHR30005">
    <property type="entry name" value="EXOPOLYPHOSPHATASE"/>
    <property type="match status" value="1"/>
</dbReference>
<dbReference type="PANTHER" id="PTHR30005:SF0">
    <property type="entry name" value="RETROGRADE REGULATION PROTEIN 2"/>
    <property type="match status" value="1"/>
</dbReference>
<dbReference type="Pfam" id="PF02541">
    <property type="entry name" value="Ppx-GppA"/>
    <property type="match status" value="1"/>
</dbReference>
<dbReference type="Pfam" id="PF21447">
    <property type="entry name" value="Ppx-GppA_III"/>
    <property type="match status" value="1"/>
</dbReference>
<dbReference type="PIRSF" id="PIRSF001267">
    <property type="entry name" value="Pyrophosphatase_GppA_Ppx"/>
    <property type="match status" value="1"/>
</dbReference>
<dbReference type="SUPFAM" id="SSF53067">
    <property type="entry name" value="Actin-like ATPase domain"/>
    <property type="match status" value="2"/>
</dbReference>
<dbReference type="SUPFAM" id="SSF109604">
    <property type="entry name" value="HD-domain/PDEase-like"/>
    <property type="match status" value="1"/>
</dbReference>
<keyword id="KW-0378">Hydrolase</keyword>
<reference key="1">
    <citation type="journal article" date="2011" name="J. Bacteriol.">
        <title>Comparative genomics of 28 Salmonella enterica isolates: evidence for CRISPR-mediated adaptive sublineage evolution.</title>
        <authorList>
            <person name="Fricke W.F."/>
            <person name="Mammel M.K."/>
            <person name="McDermott P.F."/>
            <person name="Tartera C."/>
            <person name="White D.G."/>
            <person name="Leclerc J.E."/>
            <person name="Ravel J."/>
            <person name="Cebula T.A."/>
        </authorList>
    </citation>
    <scope>NUCLEOTIDE SEQUENCE [LARGE SCALE GENOMIC DNA]</scope>
    <source>
        <strain>CVM19633</strain>
    </source>
</reference>
<gene>
    <name evidence="1" type="primary">gppA</name>
    <name type="ordered locus">SeSA_A4125</name>
</gene>